<sequence length="543" mass="59049">MASFFDDDQPSNLTEFSVSELSGSIKRTIETAFDQVRVRGEISGFRGQHSSGHAYFSLKDDKARIDAVIWKGSFSKLKYRPEEGMEVIATGRITTFPGSSKYQIVIEQMEPAGAGALMALIEERKRRFTAEGLFDPATKQLLPFMPKVIGVVTSPTGAVIRDILHRISDRFPVHVLVWPVKVQGEGSGDEVANAINGFNAFQPDGVIPRPDVLIVARGGGSLEDLWSFNDEAVVRAAAASAIPLISAVGHETDWTLIDYAADVRAPTPTGAAEMAVPVKADLEAQLAGLAARLAGAVNRQMDHRRQNLRALARALPSLDQLLALPRRRFDEAASGLGRSLELNTMTKRQSFERAAAKLSPDMLVRRLVERRQRVSERAALSDRIIERLIERQKANLGRIDATLTAVPARLKAQTGRSRDRLDSFSRRADSAVINDLRRARSTVSAHDRMLQSLSYKNVLMRGYAVIRGQDDRPLSRAAGLEDGRAIAIEFADGRVSAVTGEGDKASPPPQAASATTTPAPGRPNPLPKSPKKSEPPAGQGSLF</sequence>
<proteinExistence type="inferred from homology"/>
<dbReference type="EC" id="3.1.11.6" evidence="1"/>
<dbReference type="EMBL" id="CP000633">
    <property type="protein sequence ID" value="ACM35082.1"/>
    <property type="molecule type" value="Genomic_DNA"/>
</dbReference>
<dbReference type="RefSeq" id="WP_012654612.1">
    <property type="nucleotide sequence ID" value="NC_011989.1"/>
</dbReference>
<dbReference type="SMR" id="B9JYI6"/>
<dbReference type="STRING" id="311402.Avi_0143"/>
<dbReference type="KEGG" id="avi:Avi_0143"/>
<dbReference type="eggNOG" id="COG1570">
    <property type="taxonomic scope" value="Bacteria"/>
</dbReference>
<dbReference type="HOGENOM" id="CLU_023625_3_1_5"/>
<dbReference type="Proteomes" id="UP000001596">
    <property type="component" value="Chromosome 1"/>
</dbReference>
<dbReference type="GO" id="GO:0005737">
    <property type="term" value="C:cytoplasm"/>
    <property type="evidence" value="ECO:0007669"/>
    <property type="project" value="UniProtKB-SubCell"/>
</dbReference>
<dbReference type="GO" id="GO:0009318">
    <property type="term" value="C:exodeoxyribonuclease VII complex"/>
    <property type="evidence" value="ECO:0007669"/>
    <property type="project" value="InterPro"/>
</dbReference>
<dbReference type="GO" id="GO:0008855">
    <property type="term" value="F:exodeoxyribonuclease VII activity"/>
    <property type="evidence" value="ECO:0007669"/>
    <property type="project" value="UniProtKB-UniRule"/>
</dbReference>
<dbReference type="GO" id="GO:0003676">
    <property type="term" value="F:nucleic acid binding"/>
    <property type="evidence" value="ECO:0007669"/>
    <property type="project" value="InterPro"/>
</dbReference>
<dbReference type="GO" id="GO:0006308">
    <property type="term" value="P:DNA catabolic process"/>
    <property type="evidence" value="ECO:0007669"/>
    <property type="project" value="UniProtKB-UniRule"/>
</dbReference>
<dbReference type="CDD" id="cd04489">
    <property type="entry name" value="ExoVII_LU_OBF"/>
    <property type="match status" value="1"/>
</dbReference>
<dbReference type="HAMAP" id="MF_00378">
    <property type="entry name" value="Exonuc_7_L"/>
    <property type="match status" value="1"/>
</dbReference>
<dbReference type="InterPro" id="IPR003753">
    <property type="entry name" value="Exonuc_VII_L"/>
</dbReference>
<dbReference type="InterPro" id="IPR020579">
    <property type="entry name" value="Exonuc_VII_lsu_C"/>
</dbReference>
<dbReference type="InterPro" id="IPR025824">
    <property type="entry name" value="OB-fold_nuc-bd_dom"/>
</dbReference>
<dbReference type="NCBIfam" id="TIGR00237">
    <property type="entry name" value="xseA"/>
    <property type="match status" value="1"/>
</dbReference>
<dbReference type="PANTHER" id="PTHR30008">
    <property type="entry name" value="EXODEOXYRIBONUCLEASE 7 LARGE SUBUNIT"/>
    <property type="match status" value="1"/>
</dbReference>
<dbReference type="PANTHER" id="PTHR30008:SF0">
    <property type="entry name" value="EXODEOXYRIBONUCLEASE 7 LARGE SUBUNIT"/>
    <property type="match status" value="1"/>
</dbReference>
<dbReference type="Pfam" id="PF02601">
    <property type="entry name" value="Exonuc_VII_L"/>
    <property type="match status" value="1"/>
</dbReference>
<dbReference type="Pfam" id="PF13742">
    <property type="entry name" value="tRNA_anti_2"/>
    <property type="match status" value="1"/>
</dbReference>
<accession>B9JYI6</accession>
<feature type="chain" id="PRO_1000200655" description="Exodeoxyribonuclease 7 large subunit">
    <location>
        <begin position="1"/>
        <end position="543"/>
    </location>
</feature>
<feature type="region of interest" description="Disordered" evidence="2">
    <location>
        <begin position="498"/>
        <end position="543"/>
    </location>
</feature>
<name>EX7L_ALLAM</name>
<organism>
    <name type="scientific">Allorhizobium ampelinum (strain ATCC BAA-846 / DSM 112012 / S4)</name>
    <name type="common">Agrobacterium vitis (strain S4)</name>
    <dbReference type="NCBI Taxonomy" id="311402"/>
    <lineage>
        <taxon>Bacteria</taxon>
        <taxon>Pseudomonadati</taxon>
        <taxon>Pseudomonadota</taxon>
        <taxon>Alphaproteobacteria</taxon>
        <taxon>Hyphomicrobiales</taxon>
        <taxon>Rhizobiaceae</taxon>
        <taxon>Rhizobium/Agrobacterium group</taxon>
        <taxon>Allorhizobium</taxon>
        <taxon>Allorhizobium ampelinum</taxon>
    </lineage>
</organism>
<protein>
    <recommendedName>
        <fullName evidence="1">Exodeoxyribonuclease 7 large subunit</fullName>
        <ecNumber evidence="1">3.1.11.6</ecNumber>
    </recommendedName>
    <alternativeName>
        <fullName evidence="1">Exodeoxyribonuclease VII large subunit</fullName>
        <shortName evidence="1">Exonuclease VII large subunit</shortName>
    </alternativeName>
</protein>
<keyword id="KW-0963">Cytoplasm</keyword>
<keyword id="KW-0269">Exonuclease</keyword>
<keyword id="KW-0378">Hydrolase</keyword>
<keyword id="KW-0540">Nuclease</keyword>
<keyword id="KW-1185">Reference proteome</keyword>
<evidence type="ECO:0000255" key="1">
    <source>
        <dbReference type="HAMAP-Rule" id="MF_00378"/>
    </source>
</evidence>
<evidence type="ECO:0000256" key="2">
    <source>
        <dbReference type="SAM" id="MobiDB-lite"/>
    </source>
</evidence>
<comment type="function">
    <text evidence="1">Bidirectionally degrades single-stranded DNA into large acid-insoluble oligonucleotides, which are then degraded further into small acid-soluble oligonucleotides.</text>
</comment>
<comment type="catalytic activity">
    <reaction evidence="1">
        <text>Exonucleolytic cleavage in either 5'- to 3'- or 3'- to 5'-direction to yield nucleoside 5'-phosphates.</text>
        <dbReference type="EC" id="3.1.11.6"/>
    </reaction>
</comment>
<comment type="subunit">
    <text evidence="1">Heterooligomer composed of large and small subunits.</text>
</comment>
<comment type="subcellular location">
    <subcellularLocation>
        <location evidence="1">Cytoplasm</location>
    </subcellularLocation>
</comment>
<comment type="similarity">
    <text evidence="1">Belongs to the XseA family.</text>
</comment>
<reference key="1">
    <citation type="journal article" date="2009" name="J. Bacteriol.">
        <title>Genome sequences of three Agrobacterium biovars help elucidate the evolution of multichromosome genomes in bacteria.</title>
        <authorList>
            <person name="Slater S.C."/>
            <person name="Goldman B.S."/>
            <person name="Goodner B."/>
            <person name="Setubal J.C."/>
            <person name="Farrand S.K."/>
            <person name="Nester E.W."/>
            <person name="Burr T.J."/>
            <person name="Banta L."/>
            <person name="Dickerman A.W."/>
            <person name="Paulsen I."/>
            <person name="Otten L."/>
            <person name="Suen G."/>
            <person name="Welch R."/>
            <person name="Almeida N.F."/>
            <person name="Arnold F."/>
            <person name="Burton O.T."/>
            <person name="Du Z."/>
            <person name="Ewing A."/>
            <person name="Godsy E."/>
            <person name="Heisel S."/>
            <person name="Houmiel K.L."/>
            <person name="Jhaveri J."/>
            <person name="Lu J."/>
            <person name="Miller N.M."/>
            <person name="Norton S."/>
            <person name="Chen Q."/>
            <person name="Phoolcharoen W."/>
            <person name="Ohlin V."/>
            <person name="Ondrusek D."/>
            <person name="Pride N."/>
            <person name="Stricklin S.L."/>
            <person name="Sun J."/>
            <person name="Wheeler C."/>
            <person name="Wilson L."/>
            <person name="Zhu H."/>
            <person name="Wood D.W."/>
        </authorList>
    </citation>
    <scope>NUCLEOTIDE SEQUENCE [LARGE SCALE GENOMIC DNA]</scope>
    <source>
        <strain>ATCC BAA-846 / DSM 112012 / S4</strain>
    </source>
</reference>
<gene>
    <name evidence="1" type="primary">xseA</name>
    <name type="ordered locus">Avi_0143</name>
</gene>